<accession>A0LJ92</accession>
<protein>
    <recommendedName>
        <fullName evidence="1">GTPase Der</fullName>
    </recommendedName>
    <alternativeName>
        <fullName evidence="1">GTP-binding protein EngA</fullName>
    </alternativeName>
</protein>
<comment type="function">
    <text evidence="1">GTPase that plays an essential role in the late steps of ribosome biogenesis.</text>
</comment>
<comment type="subunit">
    <text evidence="1">Associates with the 50S ribosomal subunit.</text>
</comment>
<comment type="similarity">
    <text evidence="1">Belongs to the TRAFAC class TrmE-Era-EngA-EngB-Septin-like GTPase superfamily. EngA (Der) GTPase family.</text>
</comment>
<gene>
    <name evidence="1" type="primary">der</name>
    <name type="synonym">engA</name>
    <name type="ordered locus">Sfum_1809</name>
</gene>
<organism>
    <name type="scientific">Syntrophobacter fumaroxidans (strain DSM 10017 / MPOB)</name>
    <dbReference type="NCBI Taxonomy" id="335543"/>
    <lineage>
        <taxon>Bacteria</taxon>
        <taxon>Pseudomonadati</taxon>
        <taxon>Thermodesulfobacteriota</taxon>
        <taxon>Syntrophobacteria</taxon>
        <taxon>Syntrophobacterales</taxon>
        <taxon>Syntrophobacteraceae</taxon>
        <taxon>Syntrophobacter</taxon>
    </lineage>
</organism>
<proteinExistence type="inferred from homology"/>
<sequence>MTVVAIVGRPNVGKSTLFNRISKDNSALVDDLPGVTRDRNYARVSWNDKPFVIIDTAGFVGQDTSAFEELTREQILLALDEADILLFVADAKTGLHPGDAELADLLRRSSKPVFYAVNKIDGSEQRRHAAEFFELGLDRIYPISAAHGFGISELMDDLCAAIPEAPAQTAEEEESGGAIRVSILGRPNVGKSTLVNHLLGAPRVIVSPVPGTTRDAVDSHIVKAGQEYVLIDTAGIRRKGRTREKLEKISIIKALQSVERSHVVVLLLDAVEGVTDQDLHIAGYIKERSRACIVGINKWDAADKDPKRTKRFMDDLHDRFRFLTYAPVLTFSALTGRNVARLLPTVKEVFRQYNQRVTTGIVNRALEETLARHEPPQAGNRRRLKFYYATQTAVRPPTFVLFCNYPQAIHFSYERYLTNRFREAFGLDKTPIRLIFRPRQRTGGTS</sequence>
<dbReference type="EMBL" id="CP000478">
    <property type="protein sequence ID" value="ABK17494.1"/>
    <property type="molecule type" value="Genomic_DNA"/>
</dbReference>
<dbReference type="RefSeq" id="WP_011698664.1">
    <property type="nucleotide sequence ID" value="NC_008554.1"/>
</dbReference>
<dbReference type="SMR" id="A0LJ92"/>
<dbReference type="FunCoup" id="A0LJ92">
    <property type="interactions" value="495"/>
</dbReference>
<dbReference type="STRING" id="335543.Sfum_1809"/>
<dbReference type="KEGG" id="sfu:Sfum_1809"/>
<dbReference type="eggNOG" id="COG1160">
    <property type="taxonomic scope" value="Bacteria"/>
</dbReference>
<dbReference type="HOGENOM" id="CLU_016077_6_2_7"/>
<dbReference type="InParanoid" id="A0LJ92"/>
<dbReference type="OrthoDB" id="9805918at2"/>
<dbReference type="Proteomes" id="UP000001784">
    <property type="component" value="Chromosome"/>
</dbReference>
<dbReference type="GO" id="GO:0005525">
    <property type="term" value="F:GTP binding"/>
    <property type="evidence" value="ECO:0007669"/>
    <property type="project" value="UniProtKB-UniRule"/>
</dbReference>
<dbReference type="GO" id="GO:0043022">
    <property type="term" value="F:ribosome binding"/>
    <property type="evidence" value="ECO:0007669"/>
    <property type="project" value="TreeGrafter"/>
</dbReference>
<dbReference type="GO" id="GO:0042254">
    <property type="term" value="P:ribosome biogenesis"/>
    <property type="evidence" value="ECO:0007669"/>
    <property type="project" value="UniProtKB-KW"/>
</dbReference>
<dbReference type="CDD" id="cd01894">
    <property type="entry name" value="EngA1"/>
    <property type="match status" value="1"/>
</dbReference>
<dbReference type="CDD" id="cd01895">
    <property type="entry name" value="EngA2"/>
    <property type="match status" value="1"/>
</dbReference>
<dbReference type="FunFam" id="3.30.300.20:FF:000004">
    <property type="entry name" value="GTPase Der"/>
    <property type="match status" value="1"/>
</dbReference>
<dbReference type="FunFam" id="3.40.50.300:FF:000040">
    <property type="entry name" value="GTPase Der"/>
    <property type="match status" value="1"/>
</dbReference>
<dbReference type="FunFam" id="3.40.50.300:FF:000057">
    <property type="entry name" value="GTPase Der"/>
    <property type="match status" value="1"/>
</dbReference>
<dbReference type="Gene3D" id="3.30.300.20">
    <property type="match status" value="1"/>
</dbReference>
<dbReference type="Gene3D" id="3.40.50.300">
    <property type="entry name" value="P-loop containing nucleotide triphosphate hydrolases"/>
    <property type="match status" value="2"/>
</dbReference>
<dbReference type="HAMAP" id="MF_00195">
    <property type="entry name" value="GTPase_Der"/>
    <property type="match status" value="1"/>
</dbReference>
<dbReference type="InterPro" id="IPR031166">
    <property type="entry name" value="G_ENGA"/>
</dbReference>
<dbReference type="InterPro" id="IPR006073">
    <property type="entry name" value="GTP-bd"/>
</dbReference>
<dbReference type="InterPro" id="IPR016484">
    <property type="entry name" value="GTPase_Der"/>
</dbReference>
<dbReference type="InterPro" id="IPR032859">
    <property type="entry name" value="KH_dom-like"/>
</dbReference>
<dbReference type="InterPro" id="IPR015946">
    <property type="entry name" value="KH_dom-like_a/b"/>
</dbReference>
<dbReference type="InterPro" id="IPR027417">
    <property type="entry name" value="P-loop_NTPase"/>
</dbReference>
<dbReference type="InterPro" id="IPR005225">
    <property type="entry name" value="Small_GTP-bd"/>
</dbReference>
<dbReference type="NCBIfam" id="TIGR03594">
    <property type="entry name" value="GTPase_EngA"/>
    <property type="match status" value="1"/>
</dbReference>
<dbReference type="NCBIfam" id="TIGR00231">
    <property type="entry name" value="small_GTP"/>
    <property type="match status" value="2"/>
</dbReference>
<dbReference type="PANTHER" id="PTHR43834">
    <property type="entry name" value="GTPASE DER"/>
    <property type="match status" value="1"/>
</dbReference>
<dbReference type="PANTHER" id="PTHR43834:SF6">
    <property type="entry name" value="GTPASE DER"/>
    <property type="match status" value="1"/>
</dbReference>
<dbReference type="Pfam" id="PF14714">
    <property type="entry name" value="KH_dom-like"/>
    <property type="match status" value="1"/>
</dbReference>
<dbReference type="Pfam" id="PF01926">
    <property type="entry name" value="MMR_HSR1"/>
    <property type="match status" value="2"/>
</dbReference>
<dbReference type="PIRSF" id="PIRSF006485">
    <property type="entry name" value="GTP-binding_EngA"/>
    <property type="match status" value="1"/>
</dbReference>
<dbReference type="PRINTS" id="PR00326">
    <property type="entry name" value="GTP1OBG"/>
</dbReference>
<dbReference type="SUPFAM" id="SSF52540">
    <property type="entry name" value="P-loop containing nucleoside triphosphate hydrolases"/>
    <property type="match status" value="2"/>
</dbReference>
<dbReference type="PROSITE" id="PS51712">
    <property type="entry name" value="G_ENGA"/>
    <property type="match status" value="2"/>
</dbReference>
<reference key="1">
    <citation type="submission" date="2006-10" db="EMBL/GenBank/DDBJ databases">
        <title>Complete sequence of Syntrophobacter fumaroxidans MPOB.</title>
        <authorList>
            <consortium name="US DOE Joint Genome Institute"/>
            <person name="Copeland A."/>
            <person name="Lucas S."/>
            <person name="Lapidus A."/>
            <person name="Barry K."/>
            <person name="Detter J.C."/>
            <person name="Glavina del Rio T."/>
            <person name="Hammon N."/>
            <person name="Israni S."/>
            <person name="Pitluck S."/>
            <person name="Goltsman E.G."/>
            <person name="Martinez M."/>
            <person name="Schmutz J."/>
            <person name="Larimer F."/>
            <person name="Land M."/>
            <person name="Hauser L."/>
            <person name="Kyrpides N."/>
            <person name="Kim E."/>
            <person name="Boone D.R."/>
            <person name="Brockman F."/>
            <person name="Culley D."/>
            <person name="Ferry J."/>
            <person name="Gunsalus R."/>
            <person name="McInerney M.J."/>
            <person name="Morrison M."/>
            <person name="Plugge C."/>
            <person name="Rohlin L."/>
            <person name="Scholten J."/>
            <person name="Sieber J."/>
            <person name="Stams A.J.M."/>
            <person name="Worm P."/>
            <person name="Henstra A.M."/>
            <person name="Richardson P."/>
        </authorList>
    </citation>
    <scope>NUCLEOTIDE SEQUENCE [LARGE SCALE GENOMIC DNA]</scope>
    <source>
        <strain>DSM 10017 / MPOB</strain>
    </source>
</reference>
<keyword id="KW-0342">GTP-binding</keyword>
<keyword id="KW-0547">Nucleotide-binding</keyword>
<keyword id="KW-1185">Reference proteome</keyword>
<keyword id="KW-0677">Repeat</keyword>
<keyword id="KW-0690">Ribosome biogenesis</keyword>
<evidence type="ECO:0000255" key="1">
    <source>
        <dbReference type="HAMAP-Rule" id="MF_00195"/>
    </source>
</evidence>
<feature type="chain" id="PRO_1000077680" description="GTPase Der">
    <location>
        <begin position="1"/>
        <end position="446"/>
    </location>
</feature>
<feature type="domain" description="EngA-type G 1">
    <location>
        <begin position="2"/>
        <end position="166"/>
    </location>
</feature>
<feature type="domain" description="EngA-type G 2">
    <location>
        <begin position="179"/>
        <end position="354"/>
    </location>
</feature>
<feature type="domain" description="KH-like" evidence="1">
    <location>
        <begin position="355"/>
        <end position="440"/>
    </location>
</feature>
<feature type="binding site" evidence="1">
    <location>
        <begin position="8"/>
        <end position="15"/>
    </location>
    <ligand>
        <name>GTP</name>
        <dbReference type="ChEBI" id="CHEBI:37565"/>
        <label>1</label>
    </ligand>
</feature>
<feature type="binding site" evidence="1">
    <location>
        <begin position="55"/>
        <end position="59"/>
    </location>
    <ligand>
        <name>GTP</name>
        <dbReference type="ChEBI" id="CHEBI:37565"/>
        <label>1</label>
    </ligand>
</feature>
<feature type="binding site" evidence="1">
    <location>
        <begin position="118"/>
        <end position="121"/>
    </location>
    <ligand>
        <name>GTP</name>
        <dbReference type="ChEBI" id="CHEBI:37565"/>
        <label>1</label>
    </ligand>
</feature>
<feature type="binding site" evidence="1">
    <location>
        <begin position="185"/>
        <end position="192"/>
    </location>
    <ligand>
        <name>GTP</name>
        <dbReference type="ChEBI" id="CHEBI:37565"/>
        <label>2</label>
    </ligand>
</feature>
<feature type="binding site" evidence="1">
    <location>
        <begin position="232"/>
        <end position="236"/>
    </location>
    <ligand>
        <name>GTP</name>
        <dbReference type="ChEBI" id="CHEBI:37565"/>
        <label>2</label>
    </ligand>
</feature>
<feature type="binding site" evidence="1">
    <location>
        <begin position="297"/>
        <end position="300"/>
    </location>
    <ligand>
        <name>GTP</name>
        <dbReference type="ChEBI" id="CHEBI:37565"/>
        <label>2</label>
    </ligand>
</feature>
<name>DER_SYNFM</name>